<comment type="function">
    <text evidence="1">One of the primary rRNA binding proteins, it binds specifically to the 5'-end of 16S ribosomal RNA.</text>
</comment>
<comment type="subunit">
    <text evidence="1">Part of the 30S ribosomal subunit.</text>
</comment>
<comment type="similarity">
    <text evidence="1">Belongs to the universal ribosomal protein uS17 family.</text>
</comment>
<name>RS17_STRZJ</name>
<keyword id="KW-0687">Ribonucleoprotein</keyword>
<keyword id="KW-0689">Ribosomal protein</keyword>
<keyword id="KW-0694">RNA-binding</keyword>
<keyword id="KW-0699">rRNA-binding</keyword>
<accession>C1CC15</accession>
<proteinExistence type="inferred from homology"/>
<feature type="chain" id="PRO_1000166501" description="Small ribosomal subunit protein uS17">
    <location>
        <begin position="1"/>
        <end position="86"/>
    </location>
</feature>
<evidence type="ECO:0000255" key="1">
    <source>
        <dbReference type="HAMAP-Rule" id="MF_01345"/>
    </source>
</evidence>
<evidence type="ECO:0000305" key="2"/>
<sequence length="86" mass="10011">MERNNRKVLVGRVVSDKMDKTITVVVETKRNHPVYGKRINYSKKYKAHDENNVAKEGDIVRIMETRPLSATKRFRLVEVVEEAVII</sequence>
<dbReference type="EMBL" id="CP000919">
    <property type="protein sequence ID" value="ACO18769.1"/>
    <property type="molecule type" value="Genomic_DNA"/>
</dbReference>
<dbReference type="RefSeq" id="WP_000440801.1">
    <property type="nucleotide sequence ID" value="NC_012466.1"/>
</dbReference>
<dbReference type="SMR" id="C1CC15"/>
<dbReference type="GeneID" id="93920913"/>
<dbReference type="KEGG" id="sjj:SPJ_0228"/>
<dbReference type="HOGENOM" id="CLU_073626_1_0_9"/>
<dbReference type="Proteomes" id="UP000002206">
    <property type="component" value="Chromosome"/>
</dbReference>
<dbReference type="GO" id="GO:0022627">
    <property type="term" value="C:cytosolic small ribosomal subunit"/>
    <property type="evidence" value="ECO:0007669"/>
    <property type="project" value="TreeGrafter"/>
</dbReference>
<dbReference type="GO" id="GO:0019843">
    <property type="term" value="F:rRNA binding"/>
    <property type="evidence" value="ECO:0007669"/>
    <property type="project" value="UniProtKB-UniRule"/>
</dbReference>
<dbReference type="GO" id="GO:0003735">
    <property type="term" value="F:structural constituent of ribosome"/>
    <property type="evidence" value="ECO:0007669"/>
    <property type="project" value="InterPro"/>
</dbReference>
<dbReference type="GO" id="GO:0006412">
    <property type="term" value="P:translation"/>
    <property type="evidence" value="ECO:0007669"/>
    <property type="project" value="UniProtKB-UniRule"/>
</dbReference>
<dbReference type="CDD" id="cd00364">
    <property type="entry name" value="Ribosomal_uS17"/>
    <property type="match status" value="1"/>
</dbReference>
<dbReference type="FunFam" id="2.40.50.140:FF:000026">
    <property type="entry name" value="30S ribosomal protein S17"/>
    <property type="match status" value="1"/>
</dbReference>
<dbReference type="Gene3D" id="2.40.50.140">
    <property type="entry name" value="Nucleic acid-binding proteins"/>
    <property type="match status" value="1"/>
</dbReference>
<dbReference type="HAMAP" id="MF_01345_B">
    <property type="entry name" value="Ribosomal_uS17_B"/>
    <property type="match status" value="1"/>
</dbReference>
<dbReference type="InterPro" id="IPR012340">
    <property type="entry name" value="NA-bd_OB-fold"/>
</dbReference>
<dbReference type="InterPro" id="IPR000266">
    <property type="entry name" value="Ribosomal_uS17"/>
</dbReference>
<dbReference type="InterPro" id="IPR019984">
    <property type="entry name" value="Ribosomal_uS17_bact/chlr"/>
</dbReference>
<dbReference type="InterPro" id="IPR019979">
    <property type="entry name" value="Ribosomal_uS17_CS"/>
</dbReference>
<dbReference type="NCBIfam" id="NF004123">
    <property type="entry name" value="PRK05610.1"/>
    <property type="match status" value="1"/>
</dbReference>
<dbReference type="NCBIfam" id="TIGR03635">
    <property type="entry name" value="uS17_bact"/>
    <property type="match status" value="1"/>
</dbReference>
<dbReference type="PANTHER" id="PTHR10744">
    <property type="entry name" value="40S RIBOSOMAL PROTEIN S11 FAMILY MEMBER"/>
    <property type="match status" value="1"/>
</dbReference>
<dbReference type="PANTHER" id="PTHR10744:SF1">
    <property type="entry name" value="SMALL RIBOSOMAL SUBUNIT PROTEIN US17M"/>
    <property type="match status" value="1"/>
</dbReference>
<dbReference type="Pfam" id="PF00366">
    <property type="entry name" value="Ribosomal_S17"/>
    <property type="match status" value="1"/>
</dbReference>
<dbReference type="PRINTS" id="PR00973">
    <property type="entry name" value="RIBOSOMALS17"/>
</dbReference>
<dbReference type="SUPFAM" id="SSF50249">
    <property type="entry name" value="Nucleic acid-binding proteins"/>
    <property type="match status" value="1"/>
</dbReference>
<dbReference type="PROSITE" id="PS00056">
    <property type="entry name" value="RIBOSOMAL_S17"/>
    <property type="match status" value="1"/>
</dbReference>
<organism>
    <name type="scientific">Streptococcus pneumoniae (strain JJA)</name>
    <dbReference type="NCBI Taxonomy" id="488222"/>
    <lineage>
        <taxon>Bacteria</taxon>
        <taxon>Bacillati</taxon>
        <taxon>Bacillota</taxon>
        <taxon>Bacilli</taxon>
        <taxon>Lactobacillales</taxon>
        <taxon>Streptococcaceae</taxon>
        <taxon>Streptococcus</taxon>
    </lineage>
</organism>
<reference key="1">
    <citation type="journal article" date="2010" name="Genome Biol.">
        <title>Structure and dynamics of the pan-genome of Streptococcus pneumoniae and closely related species.</title>
        <authorList>
            <person name="Donati C."/>
            <person name="Hiller N.L."/>
            <person name="Tettelin H."/>
            <person name="Muzzi A."/>
            <person name="Croucher N.J."/>
            <person name="Angiuoli S.V."/>
            <person name="Oggioni M."/>
            <person name="Dunning Hotopp J.C."/>
            <person name="Hu F.Z."/>
            <person name="Riley D.R."/>
            <person name="Covacci A."/>
            <person name="Mitchell T.J."/>
            <person name="Bentley S.D."/>
            <person name="Kilian M."/>
            <person name="Ehrlich G.D."/>
            <person name="Rappuoli R."/>
            <person name="Moxon E.R."/>
            <person name="Masignani V."/>
        </authorList>
    </citation>
    <scope>NUCLEOTIDE SEQUENCE [LARGE SCALE GENOMIC DNA]</scope>
    <source>
        <strain>JJA</strain>
    </source>
</reference>
<gene>
    <name evidence="1" type="primary">rpsQ</name>
    <name type="ordered locus">SPJ_0228</name>
</gene>
<protein>
    <recommendedName>
        <fullName evidence="1">Small ribosomal subunit protein uS17</fullName>
    </recommendedName>
    <alternativeName>
        <fullName evidence="2">30S ribosomal protein S17</fullName>
    </alternativeName>
</protein>